<organism>
    <name type="scientific">Rickettsia peacockii (strain Rustic)</name>
    <dbReference type="NCBI Taxonomy" id="562019"/>
    <lineage>
        <taxon>Bacteria</taxon>
        <taxon>Pseudomonadati</taxon>
        <taxon>Pseudomonadota</taxon>
        <taxon>Alphaproteobacteria</taxon>
        <taxon>Rickettsiales</taxon>
        <taxon>Rickettsiaceae</taxon>
        <taxon>Rickettsieae</taxon>
        <taxon>Rickettsia</taxon>
        <taxon>spotted fever group</taxon>
    </lineage>
</organism>
<sequence>MNIKDIGVIIAKKPLKENTFIITVFTKNHGLYSGVVKEFSKKSKFIYQEGNIIDFLWQARLHEHIGMAKCELIKSYTGYFITNKAKLYAFNSVISLIKELFHEREEHSKFFLFLINYLDNLSKNFCFRDYINFELALLAETGYKLDLTKCGVSHVTTDLIYVSPKSARALSYEVGKPYKDKLLMLPRFLLSDNSEITLEEKRQALALTNYFFNRYLFHNNRQVEARQTFIEYTLNNF</sequence>
<reference key="1">
    <citation type="journal article" date="2009" name="PLoS ONE">
        <title>Genome sequence of the endosymbiont Rickettsia peacockii and comparison with virulent Rickettsia rickettsii: identification of virulence factors.</title>
        <authorList>
            <person name="Felsheim R.F."/>
            <person name="Kurtti T.J."/>
            <person name="Munderloh U.G."/>
        </authorList>
    </citation>
    <scope>NUCLEOTIDE SEQUENCE [LARGE SCALE GENOMIC DNA]</scope>
    <source>
        <strain>Rustic</strain>
    </source>
</reference>
<feature type="chain" id="PRO_1000204109" description="DNA repair protein RecO">
    <location>
        <begin position="1"/>
        <end position="237"/>
    </location>
</feature>
<keyword id="KW-0227">DNA damage</keyword>
<keyword id="KW-0233">DNA recombination</keyword>
<keyword id="KW-0234">DNA repair</keyword>
<comment type="function">
    <text evidence="1">Involved in DNA repair and RecF pathway recombination.</text>
</comment>
<comment type="similarity">
    <text evidence="1">Belongs to the RecO family.</text>
</comment>
<name>RECO_RICPU</name>
<protein>
    <recommendedName>
        <fullName evidence="1">DNA repair protein RecO</fullName>
    </recommendedName>
    <alternativeName>
        <fullName evidence="1">Recombination protein O</fullName>
    </alternativeName>
</protein>
<gene>
    <name evidence="1" type="primary">recO</name>
    <name type="ordered locus">RPR_00760</name>
</gene>
<evidence type="ECO:0000255" key="1">
    <source>
        <dbReference type="HAMAP-Rule" id="MF_00201"/>
    </source>
</evidence>
<dbReference type="EMBL" id="CP001227">
    <property type="protein sequence ID" value="ACR47118.1"/>
    <property type="molecule type" value="Genomic_DNA"/>
</dbReference>
<dbReference type="RefSeq" id="WP_012736416.1">
    <property type="nucleotide sequence ID" value="NC_012730.1"/>
</dbReference>
<dbReference type="SMR" id="C4K0L7"/>
<dbReference type="KEGG" id="rpk:RPR_00760"/>
<dbReference type="HOGENOM" id="CLU_086029_0_0_5"/>
<dbReference type="Proteomes" id="UP000005015">
    <property type="component" value="Chromosome"/>
</dbReference>
<dbReference type="GO" id="GO:0043590">
    <property type="term" value="C:bacterial nucleoid"/>
    <property type="evidence" value="ECO:0007669"/>
    <property type="project" value="TreeGrafter"/>
</dbReference>
<dbReference type="GO" id="GO:0006310">
    <property type="term" value="P:DNA recombination"/>
    <property type="evidence" value="ECO:0007669"/>
    <property type="project" value="UniProtKB-UniRule"/>
</dbReference>
<dbReference type="GO" id="GO:0006302">
    <property type="term" value="P:double-strand break repair"/>
    <property type="evidence" value="ECO:0007669"/>
    <property type="project" value="TreeGrafter"/>
</dbReference>
<dbReference type="Gene3D" id="2.40.50.140">
    <property type="entry name" value="Nucleic acid-binding proteins"/>
    <property type="match status" value="1"/>
</dbReference>
<dbReference type="Gene3D" id="1.20.1440.120">
    <property type="entry name" value="Recombination protein O, C-terminal domain"/>
    <property type="match status" value="1"/>
</dbReference>
<dbReference type="HAMAP" id="MF_00201">
    <property type="entry name" value="RecO"/>
    <property type="match status" value="1"/>
</dbReference>
<dbReference type="InterPro" id="IPR037278">
    <property type="entry name" value="ARFGAP/RecO"/>
</dbReference>
<dbReference type="InterPro" id="IPR022572">
    <property type="entry name" value="DNA_rep/recomb_RecO_N"/>
</dbReference>
<dbReference type="InterPro" id="IPR012340">
    <property type="entry name" value="NA-bd_OB-fold"/>
</dbReference>
<dbReference type="InterPro" id="IPR003717">
    <property type="entry name" value="RecO"/>
</dbReference>
<dbReference type="InterPro" id="IPR042242">
    <property type="entry name" value="RecO_C"/>
</dbReference>
<dbReference type="NCBIfam" id="TIGR00613">
    <property type="entry name" value="reco"/>
    <property type="match status" value="1"/>
</dbReference>
<dbReference type="PANTHER" id="PTHR33991">
    <property type="entry name" value="DNA REPAIR PROTEIN RECO"/>
    <property type="match status" value="1"/>
</dbReference>
<dbReference type="PANTHER" id="PTHR33991:SF1">
    <property type="entry name" value="DNA REPAIR PROTEIN RECO"/>
    <property type="match status" value="1"/>
</dbReference>
<dbReference type="Pfam" id="PF02565">
    <property type="entry name" value="RecO_C"/>
    <property type="match status" value="1"/>
</dbReference>
<dbReference type="Pfam" id="PF11967">
    <property type="entry name" value="RecO_N"/>
    <property type="match status" value="1"/>
</dbReference>
<dbReference type="SUPFAM" id="SSF57863">
    <property type="entry name" value="ArfGap/RecO-like zinc finger"/>
    <property type="match status" value="1"/>
</dbReference>
<dbReference type="SUPFAM" id="SSF50249">
    <property type="entry name" value="Nucleic acid-binding proteins"/>
    <property type="match status" value="1"/>
</dbReference>
<accession>C4K0L7</accession>
<proteinExistence type="inferred from homology"/>